<sequence length="301" mass="33146">MKFATGELYNRMFVGLIIDDEKIMDLQKAEKKLFELETIPGSLIECIAEGDKFVAHARQLAEWAKKPNDELGSFMYSLSEVKLHAPIPKPSKNIICIGKNYRDHAIEMGSEADIPEHPMVFTKSPVTVTGHGDIVKSHEEVTSQLDYEGELAVVIGKSGTRISKEDAYDHVFGYTIVNDITARDLQKRHKQFFIGKSLDTTCPMGPVLVHKSSIQEPERLKVETRVNGELRQSGSASDMIFSIPELIETLSKGMTLEAGDIIATGTPSGVGKGFTPPKFLRSGDKIDITIDPIGTLSNQIG</sequence>
<comment type="function">
    <text evidence="2 3">Tautomerase that converts enol-oxaloacetate to the keto form of oxaloacetate (PubMed:38287013). Also shows weak oxaloacetate decarboxylase (ODx), catalyzing the decarboxylation of oxaloacetate (OAA) to pyruvate and CO(2) (PubMed:38047707).</text>
</comment>
<comment type="catalytic activity">
    <reaction evidence="3">
        <text>oxaloacetate = enol-oxaloacetate</text>
        <dbReference type="Rhea" id="RHEA:16021"/>
        <dbReference type="ChEBI" id="CHEBI:16452"/>
        <dbReference type="ChEBI" id="CHEBI:17479"/>
        <dbReference type="EC" id="5.3.2.2"/>
    </reaction>
    <physiologicalReaction direction="right-to-left" evidence="3">
        <dbReference type="Rhea" id="RHEA:16023"/>
    </physiologicalReaction>
</comment>
<comment type="catalytic activity">
    <reaction evidence="2">
        <text>oxaloacetate + H(+) = pyruvate + CO2</text>
        <dbReference type="Rhea" id="RHEA:15641"/>
        <dbReference type="ChEBI" id="CHEBI:15361"/>
        <dbReference type="ChEBI" id="CHEBI:15378"/>
        <dbReference type="ChEBI" id="CHEBI:16452"/>
        <dbReference type="ChEBI" id="CHEBI:16526"/>
        <dbReference type="EC" id="4.1.1.112"/>
    </reaction>
</comment>
<comment type="cofactor">
    <cofactor evidence="2">
        <name>Mg(2+)</name>
        <dbReference type="ChEBI" id="CHEBI:18420"/>
    </cofactor>
    <cofactor evidence="2">
        <name>Mn(2+)</name>
        <dbReference type="ChEBI" id="CHEBI:29035"/>
    </cofactor>
    <text evidence="2">Requires a divalent metal cation for activity.</text>
</comment>
<comment type="biophysicochemical properties">
    <kinetics>
        <KM evidence="3">43.8 uM for enol-oxaloacetate</KM>
        <KM evidence="2">134 uM for oxaloacetate (with oxaloacetate decarboxylase activity)</KM>
        <Vmax evidence="3">402.0 umol/min/mg enzyme</Vmax>
        <text evidence="3">kcat is 237 sec(-1) with enol-oxaloacetate as substrate (PubMed:38287013). kcat is 0.52 sec(-1) with oxaloacetate as substrate for koxaloacetate decarboxylase activity (PubMed:38287013).</text>
    </kinetics>
</comment>
<comment type="subunit">
    <text evidence="2">Homodimer.</text>
</comment>
<comment type="subcellular location">
    <subcellularLocation>
        <location evidence="2">Cytoplasm</location>
    </subcellularLocation>
    <text evidence="2">Localizes in the form of helical filaments that run the length of the cell.</text>
</comment>
<comment type="induction">
    <text evidence="1">In response to ammonium, tryptophan, glucose, and phosphate starvation.</text>
</comment>
<comment type="similarity">
    <text evidence="5">Belongs to the FAH family.</text>
</comment>
<reference key="1">
    <citation type="journal article" date="1997" name="Microbiology">
        <title>Sequencing of regions downstream of addA (98 degrees) and citG (289 degrees) in Bacillus subtilis.</title>
        <authorList>
            <person name="Medina N."/>
            <person name="Vannier F."/>
            <person name="Roche B."/>
            <person name="Autret S."/>
            <person name="Levine A."/>
            <person name="Seror S.J."/>
        </authorList>
    </citation>
    <scope>NUCLEOTIDE SEQUENCE [GENOMIC DNA]</scope>
    <source>
        <strain>168</strain>
    </source>
</reference>
<reference key="2">
    <citation type="journal article" date="1997" name="Nature">
        <title>The complete genome sequence of the Gram-positive bacterium Bacillus subtilis.</title>
        <authorList>
            <person name="Kunst F."/>
            <person name="Ogasawara N."/>
            <person name="Moszer I."/>
            <person name="Albertini A.M."/>
            <person name="Alloni G."/>
            <person name="Azevedo V."/>
            <person name="Bertero M.G."/>
            <person name="Bessieres P."/>
            <person name="Bolotin A."/>
            <person name="Borchert S."/>
            <person name="Borriss R."/>
            <person name="Boursier L."/>
            <person name="Brans A."/>
            <person name="Braun M."/>
            <person name="Brignell S.C."/>
            <person name="Bron S."/>
            <person name="Brouillet S."/>
            <person name="Bruschi C.V."/>
            <person name="Caldwell B."/>
            <person name="Capuano V."/>
            <person name="Carter N.M."/>
            <person name="Choi S.-K."/>
            <person name="Codani J.-J."/>
            <person name="Connerton I.F."/>
            <person name="Cummings N.J."/>
            <person name="Daniel R.A."/>
            <person name="Denizot F."/>
            <person name="Devine K.M."/>
            <person name="Duesterhoeft A."/>
            <person name="Ehrlich S.D."/>
            <person name="Emmerson P.T."/>
            <person name="Entian K.-D."/>
            <person name="Errington J."/>
            <person name="Fabret C."/>
            <person name="Ferrari E."/>
            <person name="Foulger D."/>
            <person name="Fritz C."/>
            <person name="Fujita M."/>
            <person name="Fujita Y."/>
            <person name="Fuma S."/>
            <person name="Galizzi A."/>
            <person name="Galleron N."/>
            <person name="Ghim S.-Y."/>
            <person name="Glaser P."/>
            <person name="Goffeau A."/>
            <person name="Golightly E.J."/>
            <person name="Grandi G."/>
            <person name="Guiseppi G."/>
            <person name="Guy B.J."/>
            <person name="Haga K."/>
            <person name="Haiech J."/>
            <person name="Harwood C.R."/>
            <person name="Henaut A."/>
            <person name="Hilbert H."/>
            <person name="Holsappel S."/>
            <person name="Hosono S."/>
            <person name="Hullo M.-F."/>
            <person name="Itaya M."/>
            <person name="Jones L.-M."/>
            <person name="Joris B."/>
            <person name="Karamata D."/>
            <person name="Kasahara Y."/>
            <person name="Klaerr-Blanchard M."/>
            <person name="Klein C."/>
            <person name="Kobayashi Y."/>
            <person name="Koetter P."/>
            <person name="Koningstein G."/>
            <person name="Krogh S."/>
            <person name="Kumano M."/>
            <person name="Kurita K."/>
            <person name="Lapidus A."/>
            <person name="Lardinois S."/>
            <person name="Lauber J."/>
            <person name="Lazarevic V."/>
            <person name="Lee S.-M."/>
            <person name="Levine A."/>
            <person name="Liu H."/>
            <person name="Masuda S."/>
            <person name="Mauel C."/>
            <person name="Medigue C."/>
            <person name="Medina N."/>
            <person name="Mellado R.P."/>
            <person name="Mizuno M."/>
            <person name="Moestl D."/>
            <person name="Nakai S."/>
            <person name="Noback M."/>
            <person name="Noone D."/>
            <person name="O'Reilly M."/>
            <person name="Ogawa K."/>
            <person name="Ogiwara A."/>
            <person name="Oudega B."/>
            <person name="Park S.-H."/>
            <person name="Parro V."/>
            <person name="Pohl T.M."/>
            <person name="Portetelle D."/>
            <person name="Porwollik S."/>
            <person name="Prescott A.M."/>
            <person name="Presecan E."/>
            <person name="Pujic P."/>
            <person name="Purnelle B."/>
            <person name="Rapoport G."/>
            <person name="Rey M."/>
            <person name="Reynolds S."/>
            <person name="Rieger M."/>
            <person name="Rivolta C."/>
            <person name="Rocha E."/>
            <person name="Roche B."/>
            <person name="Rose M."/>
            <person name="Sadaie Y."/>
            <person name="Sato T."/>
            <person name="Scanlan E."/>
            <person name="Schleich S."/>
            <person name="Schroeter R."/>
            <person name="Scoffone F."/>
            <person name="Sekiguchi J."/>
            <person name="Sekowska A."/>
            <person name="Seror S.J."/>
            <person name="Serror P."/>
            <person name="Shin B.-S."/>
            <person name="Soldo B."/>
            <person name="Sorokin A."/>
            <person name="Tacconi E."/>
            <person name="Takagi T."/>
            <person name="Takahashi H."/>
            <person name="Takemaru K."/>
            <person name="Takeuchi M."/>
            <person name="Tamakoshi A."/>
            <person name="Tanaka T."/>
            <person name="Terpstra P."/>
            <person name="Tognoni A."/>
            <person name="Tosato V."/>
            <person name="Uchiyama S."/>
            <person name="Vandenbol M."/>
            <person name="Vannier F."/>
            <person name="Vassarotti A."/>
            <person name="Viari A."/>
            <person name="Wambutt R."/>
            <person name="Wedler E."/>
            <person name="Wedler H."/>
            <person name="Weitzenegger T."/>
            <person name="Winters P."/>
            <person name="Wipat A."/>
            <person name="Yamamoto H."/>
            <person name="Yamane K."/>
            <person name="Yasumoto K."/>
            <person name="Yata K."/>
            <person name="Yoshida K."/>
            <person name="Yoshikawa H.-F."/>
            <person name="Zumstein E."/>
            <person name="Yoshikawa H."/>
            <person name="Danchin A."/>
        </authorList>
    </citation>
    <scope>NUCLEOTIDE SEQUENCE [LARGE SCALE GENOMIC DNA]</scope>
    <source>
        <strain>168</strain>
    </source>
</reference>
<reference key="3">
    <citation type="journal article" date="2006" name="Proteomics">
        <title>Proteome signatures for stress and starvation in Bacillus subtilis as revealed by a 2-D gel image color coding approach.</title>
        <authorList>
            <person name="Tam L.T."/>
            <person name="Antelmann H."/>
            <person name="Eymann C."/>
            <person name="Albrecht D."/>
            <person name="Bernhardt J."/>
            <person name="Hecker M."/>
        </authorList>
    </citation>
    <scope>INDUCTION BY NUTRIENT LIMITATION CONDITIONS</scope>
    <source>
        <strain>168</strain>
    </source>
</reference>
<reference key="4">
    <citation type="journal article" date="2024" name="Nat. Commun.">
        <title>A universal metabolite repair enzyme removes a strong inhibitor of the TCA cycle.</title>
        <authorList>
            <person name="Zmuda A.J."/>
            <person name="Kang X."/>
            <person name="Wissbroecker K.B."/>
            <person name="Freund Saxhaug K."/>
            <person name="Costa K.C."/>
            <person name="Hegeman A.D."/>
            <person name="Niehaus T.D."/>
        </authorList>
    </citation>
    <scope>FUNCTION</scope>
    <scope>CATALYTIC ACTIVITY</scope>
    <scope>BIOPHYSICOCHEMICAL PROPERTIES</scope>
</reference>
<reference evidence="6 7 8" key="5">
    <citation type="journal article" date="2024" name="J. Bacteriol.">
        <title>Bacillus subtilis YisK possesses oxaloacetate decarboxylase activity and exhibits Mbl-dependent localization.</title>
        <authorList>
            <person name="Guo T."/>
            <person name="Sperber A.M."/>
            <person name="Krieger I.V."/>
            <person name="Duan Y."/>
            <person name="Chemelewski V.R."/>
            <person name="Sacchettini J.C."/>
            <person name="Herman J.K."/>
        </authorList>
    </citation>
    <scope>X-RAY CRYSTALLOGRAPHY (1.93 ANGSTROMS) IN COMPLEX WITH MAGNESIUM AND OXALATE ION</scope>
    <scope>FUNCTION</scope>
    <scope>CATALYTIC ACTIVITY</scope>
    <scope>COFACTOR</scope>
    <scope>SUBCELLULAR LOCATION</scope>
    <scope>MUTAGENESIS OF GLU-30 AND 148-GLU--GLU-150</scope>
</reference>
<dbReference type="EC" id="5.3.2.2" evidence="3"/>
<dbReference type="EC" id="4.1.1.112" evidence="2"/>
<dbReference type="EMBL" id="Y09476">
    <property type="protein sequence ID" value="CAA70682.1"/>
    <property type="molecule type" value="Genomic_DNA"/>
</dbReference>
<dbReference type="EMBL" id="AL009126">
    <property type="protein sequence ID" value="CAB12915.1"/>
    <property type="molecule type" value="Genomic_DNA"/>
</dbReference>
<dbReference type="PIR" id="C69837">
    <property type="entry name" value="C69837"/>
</dbReference>
<dbReference type="RefSeq" id="WP_003245441.1">
    <property type="nucleotide sequence ID" value="NZ_OZ025638.1"/>
</dbReference>
<dbReference type="PDB" id="8SKY">
    <property type="method" value="X-ray"/>
    <property type="resolution" value="2.40 A"/>
    <property type="chains" value="A/B=1-301"/>
</dbReference>
<dbReference type="PDB" id="8SUT">
    <property type="method" value="X-ray"/>
    <property type="resolution" value="1.93 A"/>
    <property type="chains" value="A/B=1-301"/>
</dbReference>
<dbReference type="PDB" id="8SUU">
    <property type="method" value="X-ray"/>
    <property type="resolution" value="2.26 A"/>
    <property type="chains" value="A/B=1-301"/>
</dbReference>
<dbReference type="PDBsum" id="8SKY"/>
<dbReference type="PDBsum" id="8SUT"/>
<dbReference type="PDBsum" id="8SUU"/>
<dbReference type="SMR" id="O06724"/>
<dbReference type="FunCoup" id="O06724">
    <property type="interactions" value="570"/>
</dbReference>
<dbReference type="STRING" id="224308.BSU10750"/>
<dbReference type="jPOST" id="O06724"/>
<dbReference type="PaxDb" id="224308-BSU10750"/>
<dbReference type="EnsemblBacteria" id="CAB12915">
    <property type="protein sequence ID" value="CAB12915"/>
    <property type="gene ID" value="BSU_10750"/>
</dbReference>
<dbReference type="GeneID" id="936356"/>
<dbReference type="KEGG" id="bsu:BSU10750"/>
<dbReference type="PATRIC" id="fig|224308.179.peg.1156"/>
<dbReference type="eggNOG" id="COG0179">
    <property type="taxonomic scope" value="Bacteria"/>
</dbReference>
<dbReference type="InParanoid" id="O06724"/>
<dbReference type="OrthoDB" id="9805307at2"/>
<dbReference type="PhylomeDB" id="O06724"/>
<dbReference type="BioCyc" id="BSUB:BSU10750-MONOMER"/>
<dbReference type="Proteomes" id="UP000001570">
    <property type="component" value="Chromosome"/>
</dbReference>
<dbReference type="GO" id="GO:0005737">
    <property type="term" value="C:cytoplasm"/>
    <property type="evidence" value="ECO:0000314"/>
    <property type="project" value="UniProtKB"/>
</dbReference>
<dbReference type="GO" id="GO:0018773">
    <property type="term" value="F:acetylpyruvate hydrolase activity"/>
    <property type="evidence" value="ECO:0000318"/>
    <property type="project" value="GO_Central"/>
</dbReference>
<dbReference type="GO" id="GO:0046872">
    <property type="term" value="F:metal ion binding"/>
    <property type="evidence" value="ECO:0007669"/>
    <property type="project" value="UniProtKB-KW"/>
</dbReference>
<dbReference type="GO" id="GO:0008948">
    <property type="term" value="F:oxaloacetate decarboxylase activity"/>
    <property type="evidence" value="ECO:0000314"/>
    <property type="project" value="UniProtKB"/>
</dbReference>
<dbReference type="GO" id="GO:0050163">
    <property type="term" value="F:oxaloacetate tautomerase activity"/>
    <property type="evidence" value="ECO:0000314"/>
    <property type="project" value="UniProtKB"/>
</dbReference>
<dbReference type="GO" id="GO:0006107">
    <property type="term" value="P:oxaloacetate metabolic process"/>
    <property type="evidence" value="ECO:0000314"/>
    <property type="project" value="UniProtKB"/>
</dbReference>
<dbReference type="FunFam" id="3.90.850.10:FF:000010">
    <property type="entry name" value="FAA hydrolase family protein"/>
    <property type="match status" value="1"/>
</dbReference>
<dbReference type="Gene3D" id="3.90.850.10">
    <property type="entry name" value="Fumarylacetoacetase-like, C-terminal domain"/>
    <property type="match status" value="1"/>
</dbReference>
<dbReference type="InterPro" id="IPR011234">
    <property type="entry name" value="Fumarylacetoacetase-like_C"/>
</dbReference>
<dbReference type="InterPro" id="IPR036663">
    <property type="entry name" value="Fumarylacetoacetase_C_sf"/>
</dbReference>
<dbReference type="PANTHER" id="PTHR11820">
    <property type="entry name" value="ACYLPYRUVASE"/>
    <property type="match status" value="1"/>
</dbReference>
<dbReference type="PANTHER" id="PTHR11820:SF7">
    <property type="entry name" value="ACYLPYRUVASE FAHD1, MITOCHONDRIAL"/>
    <property type="match status" value="1"/>
</dbReference>
<dbReference type="Pfam" id="PF01557">
    <property type="entry name" value="FAA_hydrolase"/>
    <property type="match status" value="1"/>
</dbReference>
<dbReference type="SUPFAM" id="SSF56529">
    <property type="entry name" value="FAH"/>
    <property type="match status" value="1"/>
</dbReference>
<proteinExistence type="evidence at protein level"/>
<accession>O06724</accession>
<accession>Q796R1</accession>
<organism>
    <name type="scientific">Bacillus subtilis (strain 168)</name>
    <dbReference type="NCBI Taxonomy" id="224308"/>
    <lineage>
        <taxon>Bacteria</taxon>
        <taxon>Bacillati</taxon>
        <taxon>Bacillota</taxon>
        <taxon>Bacilli</taxon>
        <taxon>Bacillales</taxon>
        <taxon>Bacillaceae</taxon>
        <taxon>Bacillus</taxon>
    </lineage>
</organism>
<feature type="chain" id="PRO_0000383352" description="Oxaloacetate tautomerase YisK">
    <location>
        <begin position="1"/>
        <end position="301"/>
    </location>
</feature>
<feature type="binding site" evidence="2 6">
    <location>
        <position position="99"/>
    </location>
    <ligand>
        <name>oxalate</name>
        <dbReference type="ChEBI" id="CHEBI:30623"/>
        <note>inhibitor</note>
    </ligand>
</feature>
<feature type="binding site" evidence="2 6 7 8">
    <location>
        <position position="148"/>
    </location>
    <ligand>
        <name>Mn(2+)</name>
        <dbReference type="ChEBI" id="CHEBI:29035"/>
    </ligand>
</feature>
<feature type="binding site" evidence="2 6 7 8">
    <location>
        <position position="150"/>
    </location>
    <ligand>
        <name>Mn(2+)</name>
        <dbReference type="ChEBI" id="CHEBI:29035"/>
    </ligand>
</feature>
<feature type="binding site" evidence="2 6 7 8">
    <location>
        <position position="179"/>
    </location>
    <ligand>
        <name>Mn(2+)</name>
        <dbReference type="ChEBI" id="CHEBI:29035"/>
    </ligand>
</feature>
<feature type="binding site" evidence="2 6">
    <location>
        <position position="196"/>
    </location>
    <ligand>
        <name>oxalate</name>
        <dbReference type="ChEBI" id="CHEBI:30623"/>
        <note>inhibitor</note>
    </ligand>
</feature>
<feature type="binding site" evidence="2 6">
    <location>
        <position position="266"/>
    </location>
    <ligand>
        <name>oxalate</name>
        <dbReference type="ChEBI" id="CHEBI:30623"/>
        <note>inhibitor</note>
    </ligand>
</feature>
<feature type="mutagenesis site" description="Impaired subcellular localization without affecting the enzyme activity." evidence="2">
    <original>E</original>
    <variation>A</variation>
    <location>
        <position position="30"/>
    </location>
</feature>
<feature type="mutagenesis site" description="Abolished enzyme activities." evidence="2">
    <original>EGE</original>
    <variation>AGA</variation>
    <location>
        <begin position="148"/>
        <end position="150"/>
    </location>
</feature>
<feature type="strand" evidence="9">
    <location>
        <begin position="2"/>
        <end position="8"/>
    </location>
</feature>
<feature type="strand" evidence="9">
    <location>
        <begin position="11"/>
        <end position="18"/>
    </location>
</feature>
<feature type="turn" evidence="9">
    <location>
        <begin position="19"/>
        <end position="21"/>
    </location>
</feature>
<feature type="strand" evidence="9">
    <location>
        <begin position="22"/>
        <end position="25"/>
    </location>
</feature>
<feature type="helix" evidence="9">
    <location>
        <begin position="26"/>
        <end position="34"/>
    </location>
</feature>
<feature type="helix" evidence="9">
    <location>
        <begin position="43"/>
        <end position="48"/>
    </location>
</feature>
<feature type="helix" evidence="9">
    <location>
        <begin position="51"/>
        <end position="64"/>
    </location>
</feature>
<feature type="helix" evidence="9">
    <location>
        <begin position="71"/>
        <end position="73"/>
    </location>
</feature>
<feature type="strand" evidence="9">
    <location>
        <begin position="75"/>
        <end position="77"/>
    </location>
</feature>
<feature type="helix" evidence="9">
    <location>
        <begin position="78"/>
        <end position="80"/>
    </location>
</feature>
<feature type="strand" evidence="9">
    <location>
        <begin position="86"/>
        <end position="89"/>
    </location>
</feature>
<feature type="strand" evidence="9">
    <location>
        <begin position="94"/>
        <end position="99"/>
    </location>
</feature>
<feature type="helix" evidence="9">
    <location>
        <begin position="102"/>
        <end position="107"/>
    </location>
</feature>
<feature type="helix" evidence="9">
    <location>
        <begin position="111"/>
        <end position="113"/>
    </location>
</feature>
<feature type="strand" evidence="9">
    <location>
        <begin position="119"/>
        <end position="123"/>
    </location>
</feature>
<feature type="helix" evidence="9">
    <location>
        <begin position="125"/>
        <end position="127"/>
    </location>
</feature>
<feature type="turn" evidence="9">
    <location>
        <begin position="139"/>
        <end position="141"/>
    </location>
</feature>
<feature type="strand" evidence="9">
    <location>
        <begin position="149"/>
        <end position="155"/>
    </location>
</feature>
<feature type="strand" evidence="9">
    <location>
        <begin position="159"/>
        <end position="161"/>
    </location>
</feature>
<feature type="helix" evidence="9">
    <location>
        <begin position="164"/>
        <end position="170"/>
    </location>
</feature>
<feature type="strand" evidence="9">
    <location>
        <begin position="171"/>
        <end position="178"/>
    </location>
</feature>
<feature type="helix" evidence="9">
    <location>
        <begin position="183"/>
        <end position="189"/>
    </location>
</feature>
<feature type="strand" evidence="9">
    <location>
        <begin position="190"/>
        <end position="192"/>
    </location>
</feature>
<feature type="helix" evidence="9">
    <location>
        <begin position="193"/>
        <end position="196"/>
    </location>
</feature>
<feature type="strand" evidence="9">
    <location>
        <begin position="202"/>
        <end position="210"/>
    </location>
</feature>
<feature type="helix" evidence="9">
    <location>
        <begin position="211"/>
        <end position="213"/>
    </location>
</feature>
<feature type="helix" evidence="9">
    <location>
        <begin position="217"/>
        <end position="219"/>
    </location>
</feature>
<feature type="strand" evidence="9">
    <location>
        <begin position="221"/>
        <end position="226"/>
    </location>
</feature>
<feature type="strand" evidence="9">
    <location>
        <begin position="229"/>
        <end position="235"/>
    </location>
</feature>
<feature type="helix" evidence="9">
    <location>
        <begin position="236"/>
        <end position="238"/>
    </location>
</feature>
<feature type="strand" evidence="9">
    <location>
        <begin position="239"/>
        <end position="241"/>
    </location>
</feature>
<feature type="helix" evidence="9">
    <location>
        <begin position="243"/>
        <end position="251"/>
    </location>
</feature>
<feature type="strand" evidence="9">
    <location>
        <begin position="252"/>
        <end position="254"/>
    </location>
</feature>
<feature type="strand" evidence="9">
    <location>
        <begin position="261"/>
        <end position="263"/>
    </location>
</feature>
<feature type="helix" evidence="9">
    <location>
        <begin position="271"/>
        <end position="273"/>
    </location>
</feature>
<feature type="strand" evidence="9">
    <location>
        <begin position="274"/>
        <end position="276"/>
    </location>
</feature>
<feature type="strand" evidence="9">
    <location>
        <begin position="285"/>
        <end position="290"/>
    </location>
</feature>
<feature type="turn" evidence="9">
    <location>
        <begin position="291"/>
        <end position="293"/>
    </location>
</feature>
<feature type="strand" evidence="9">
    <location>
        <begin position="294"/>
        <end position="300"/>
    </location>
</feature>
<evidence type="ECO:0000269" key="1">
    <source>
    </source>
</evidence>
<evidence type="ECO:0000269" key="2">
    <source>
    </source>
</evidence>
<evidence type="ECO:0000269" key="3">
    <source>
    </source>
</evidence>
<evidence type="ECO:0000303" key="4">
    <source>
    </source>
</evidence>
<evidence type="ECO:0000305" key="5"/>
<evidence type="ECO:0007744" key="6">
    <source>
        <dbReference type="PDB" id="8SKY"/>
    </source>
</evidence>
<evidence type="ECO:0007744" key="7">
    <source>
        <dbReference type="PDB" id="8SUT"/>
    </source>
</evidence>
<evidence type="ECO:0007744" key="8">
    <source>
        <dbReference type="PDB" id="8SUU"/>
    </source>
</evidence>
<evidence type="ECO:0007829" key="9">
    <source>
        <dbReference type="PDB" id="8SUT"/>
    </source>
</evidence>
<keyword id="KW-0002">3D-structure</keyword>
<keyword id="KW-0963">Cytoplasm</keyword>
<keyword id="KW-0413">Isomerase</keyword>
<keyword id="KW-0456">Lyase</keyword>
<keyword id="KW-0464">Manganese</keyword>
<keyword id="KW-0479">Metal-binding</keyword>
<keyword id="KW-1185">Reference proteome</keyword>
<protein>
    <recommendedName>
        <fullName evidence="5">Oxaloacetate tautomerase YisK</fullName>
        <ecNumber evidence="3">5.3.2.2</ecNumber>
    </recommendedName>
    <alternativeName>
        <fullName>Oxaloacetate decarboxylase YisK</fullName>
        <ecNumber evidence="2">4.1.1.112</ecNumber>
    </alternativeName>
</protein>
<gene>
    <name evidence="4" type="primary">yisK</name>
    <name type="ordered locus">BSU10750</name>
</gene>
<name>YISK_BACSU</name>